<proteinExistence type="evidence at transcript level"/>
<comment type="function">
    <text evidence="1">ATP-dependent RNA helicase required during spermatogenesis to repress transposable elements and preventing their mobilization, which is essential for the germline integrity. Acts via the piRNA metabolic process, which mediates the repression of transposable elements during meiosis by forming complexes composed of piRNAs and Piwi proteins and governs the methylation and subsequent repression of transposons. Involved in the secondary piRNAs metabolic process, the production of piRNAs in fetal male germ cells through a ping-pong amplification cycle. Required for PIWIL2 slicing-triggered piRNA biogenesis: helicase activity enables utilization of one of the slice cleavage fragments generated by PIWIL2 and processing these pre-piRNAs into piRNAs.</text>
</comment>
<comment type="catalytic activity">
    <reaction evidence="1">
        <text>ATP + H2O = ADP + phosphate + H(+)</text>
        <dbReference type="Rhea" id="RHEA:13065"/>
        <dbReference type="ChEBI" id="CHEBI:15377"/>
        <dbReference type="ChEBI" id="CHEBI:15378"/>
        <dbReference type="ChEBI" id="CHEBI:30616"/>
        <dbReference type="ChEBI" id="CHEBI:43474"/>
        <dbReference type="ChEBI" id="CHEBI:456216"/>
        <dbReference type="EC" id="3.6.4.13"/>
    </reaction>
</comment>
<comment type="subunit">
    <text evidence="1">Found in a mRNP complex, at least composed of TDRD1, TDRD6, TDRD7 and DDX4. Interacts with RANBP9. Interacts with RANBP10. Interacts with PIWIL2 and MAEL. Interacts with BMAL1 and CLOCK. Interacts with Tex19.1 and, probably, Tex19.2. Interacts with RBM46.</text>
</comment>
<comment type="subcellular location">
    <subcellularLocation>
        <location evidence="1">Cytoplasm</location>
    </subcellularLocation>
    <subcellularLocation>
        <location evidence="1">Cytoplasm</location>
        <location evidence="1">Perinuclear region</location>
    </subcellularLocation>
    <text evidence="1">Component of the meiotic nuage, also named P granule, a germ-cell-specific organelle required to repress transposon activity during meiosis.</text>
</comment>
<comment type="similarity">
    <text evidence="7">Belongs to the DEAD box helicase family. DDX4/VASA subfamily.</text>
</comment>
<organism>
    <name type="scientific">Sus scrofa</name>
    <name type="common">Pig</name>
    <dbReference type="NCBI Taxonomy" id="9823"/>
    <lineage>
        <taxon>Eukaryota</taxon>
        <taxon>Metazoa</taxon>
        <taxon>Chordata</taxon>
        <taxon>Craniata</taxon>
        <taxon>Vertebrata</taxon>
        <taxon>Euteleostomi</taxon>
        <taxon>Mammalia</taxon>
        <taxon>Eutheria</taxon>
        <taxon>Laurasiatheria</taxon>
        <taxon>Artiodactyla</taxon>
        <taxon>Suina</taxon>
        <taxon>Suidae</taxon>
        <taxon>Sus</taxon>
    </lineage>
</organism>
<reference key="1">
    <citation type="submission" date="2004-05" db="EMBL/GenBank/DDBJ databases">
        <title>Characterization of porcine VASA homolog gene.</title>
        <authorList>
            <person name="Lee G."/>
        </authorList>
    </citation>
    <scope>NUCLEOTIDE SEQUENCE [MRNA]</scope>
</reference>
<name>DDX4_PIG</name>
<accession>Q6GWX0</accession>
<evidence type="ECO:0000250" key="1">
    <source>
        <dbReference type="UniProtKB" id="Q61496"/>
    </source>
</evidence>
<evidence type="ECO:0000250" key="2">
    <source>
        <dbReference type="UniProtKB" id="Q64060"/>
    </source>
</evidence>
<evidence type="ECO:0000250" key="3">
    <source>
        <dbReference type="UniProtKB" id="Q9NQI0"/>
    </source>
</evidence>
<evidence type="ECO:0000255" key="4">
    <source>
        <dbReference type="PROSITE-ProRule" id="PRU00541"/>
    </source>
</evidence>
<evidence type="ECO:0000255" key="5">
    <source>
        <dbReference type="PROSITE-ProRule" id="PRU00542"/>
    </source>
</evidence>
<evidence type="ECO:0000256" key="6">
    <source>
        <dbReference type="SAM" id="MobiDB-lite"/>
    </source>
</evidence>
<evidence type="ECO:0000305" key="7"/>
<gene>
    <name type="primary">DDX4</name>
    <name type="synonym">VASA</name>
</gene>
<sequence>MGDEDWEAEINPHVSSYVPIFEKDGYSGENGDKFNRTTASSSEMDDGPSGRDHFMKSGFTSGRSYGKRDAGESNKRENTSTTGGFGVGKSFGNRGFSNNRFEDGDSSGFWRESTNDCEDNTTRNRGFSKRGGSRDGNKSEASGPFRRGGRGSFRGCRGGFGLGSQNSELDPDQGMQRGGGLFGSGRPAASDTGNGDTYQSRSGRGRGGYKGLNEEVVTGSGKNSWKSEAEGGESSDTQGPKVTYIPPPPPEDEDSIFAHYQTGINFDKYDTILVEVSGHDAPPAILTFEEANLCQTLNNNIAKAGYTKLTPVQKYSIPIILAGRDLMACAQTGSGKTAAFLLPILAHMMHDGITASRFKELQEPECIIVAPTRELVNQIYLEARKFSFGTCVRAVVIYGGTQLGHSIRQIVQGCNILCATPGRLMDIIGKEKIGLKQIKYLVLDEADRMLDMGFGPEMKKLISCPGMPSKEQRQTLMFSATFPEEIQRLAAEFLKSNYLFVAVGQVGGACRDVQQADLQVGQYSKREKLLEILRNIGDERTMVFVETKKKADFIATFLCQEKISTTSIHGDREQREREQALGDFRFGKCPVLVATSVAARGLDIENVQHVINFDLPSTIDEYVHRIGRTGRCGNTGRAISFFDLESDNHLAQPLVKVLTDAQQDVPAWLEEIAFSTYIPGFSGSTRGNVFASVDTRKGKSTLNTAGFSSSQAPNPVDDESWD</sequence>
<keyword id="KW-0067">ATP-binding</keyword>
<keyword id="KW-0963">Cytoplasm</keyword>
<keyword id="KW-0217">Developmental protein</keyword>
<keyword id="KW-0221">Differentiation</keyword>
<keyword id="KW-0347">Helicase</keyword>
<keyword id="KW-0378">Hydrolase</keyword>
<keyword id="KW-0469">Meiosis</keyword>
<keyword id="KW-0547">Nucleotide-binding</keyword>
<keyword id="KW-0597">Phosphoprotein</keyword>
<keyword id="KW-1185">Reference proteome</keyword>
<keyword id="KW-0677">Repeat</keyword>
<keyword id="KW-0943">RNA-mediated gene silencing</keyword>
<keyword id="KW-0744">Spermatogenesis</keyword>
<dbReference type="EC" id="3.6.4.13" evidence="1"/>
<dbReference type="EMBL" id="AY626785">
    <property type="protein sequence ID" value="AAT46129.1"/>
    <property type="molecule type" value="mRNA"/>
</dbReference>
<dbReference type="SMR" id="Q6GWX0"/>
<dbReference type="FunCoup" id="Q6GWX0">
    <property type="interactions" value="105"/>
</dbReference>
<dbReference type="STRING" id="9823.ENSSSCP00000063433"/>
<dbReference type="PaxDb" id="9823-ENSSSCP00000026827"/>
<dbReference type="PeptideAtlas" id="Q6GWX0"/>
<dbReference type="eggNOG" id="KOG0335">
    <property type="taxonomic scope" value="Eukaryota"/>
</dbReference>
<dbReference type="InParanoid" id="Q6GWX0"/>
<dbReference type="Proteomes" id="UP000008227">
    <property type="component" value="Unplaced"/>
</dbReference>
<dbReference type="Proteomes" id="UP000314985">
    <property type="component" value="Unplaced"/>
</dbReference>
<dbReference type="Proteomes" id="UP000694570">
    <property type="component" value="Unplaced"/>
</dbReference>
<dbReference type="Proteomes" id="UP000694571">
    <property type="component" value="Unplaced"/>
</dbReference>
<dbReference type="Proteomes" id="UP000694720">
    <property type="component" value="Unplaced"/>
</dbReference>
<dbReference type="Proteomes" id="UP000694722">
    <property type="component" value="Unplaced"/>
</dbReference>
<dbReference type="Proteomes" id="UP000694723">
    <property type="component" value="Unplaced"/>
</dbReference>
<dbReference type="Proteomes" id="UP000694724">
    <property type="component" value="Unplaced"/>
</dbReference>
<dbReference type="Proteomes" id="UP000694725">
    <property type="component" value="Unplaced"/>
</dbReference>
<dbReference type="Proteomes" id="UP000694726">
    <property type="component" value="Unplaced"/>
</dbReference>
<dbReference type="Proteomes" id="UP000694727">
    <property type="component" value="Unplaced"/>
</dbReference>
<dbReference type="Proteomes" id="UP000694728">
    <property type="component" value="Unplaced"/>
</dbReference>
<dbReference type="GO" id="GO:0033391">
    <property type="term" value="C:chromatoid body"/>
    <property type="evidence" value="ECO:0000314"/>
    <property type="project" value="MGI"/>
</dbReference>
<dbReference type="GO" id="GO:0005737">
    <property type="term" value="C:cytoplasm"/>
    <property type="evidence" value="ECO:0000250"/>
    <property type="project" value="UniProtKB"/>
</dbReference>
<dbReference type="GO" id="GO:0005634">
    <property type="term" value="C:nucleus"/>
    <property type="evidence" value="ECO:0000318"/>
    <property type="project" value="GO_Central"/>
</dbReference>
<dbReference type="GO" id="GO:0043186">
    <property type="term" value="C:P granule"/>
    <property type="evidence" value="ECO:0000318"/>
    <property type="project" value="GO_Central"/>
</dbReference>
<dbReference type="GO" id="GO:0048471">
    <property type="term" value="C:perinuclear region of cytoplasm"/>
    <property type="evidence" value="ECO:0007669"/>
    <property type="project" value="UniProtKB-SubCell"/>
</dbReference>
<dbReference type="GO" id="GO:0071546">
    <property type="term" value="C:pi-body"/>
    <property type="evidence" value="ECO:0000250"/>
    <property type="project" value="UniProtKB"/>
</dbReference>
<dbReference type="GO" id="GO:0071547">
    <property type="term" value="C:piP-body"/>
    <property type="evidence" value="ECO:0000250"/>
    <property type="project" value="UniProtKB"/>
</dbReference>
<dbReference type="GO" id="GO:0005524">
    <property type="term" value="F:ATP binding"/>
    <property type="evidence" value="ECO:0007669"/>
    <property type="project" value="UniProtKB-KW"/>
</dbReference>
<dbReference type="GO" id="GO:0016887">
    <property type="term" value="F:ATP hydrolysis activity"/>
    <property type="evidence" value="ECO:0000250"/>
    <property type="project" value="UniProtKB"/>
</dbReference>
<dbReference type="GO" id="GO:0003729">
    <property type="term" value="F:mRNA binding"/>
    <property type="evidence" value="ECO:0000318"/>
    <property type="project" value="GO_Central"/>
</dbReference>
<dbReference type="GO" id="GO:0003724">
    <property type="term" value="F:RNA helicase activity"/>
    <property type="evidence" value="ECO:0000318"/>
    <property type="project" value="GO_Central"/>
</dbReference>
<dbReference type="GO" id="GO:0030154">
    <property type="term" value="P:cell differentiation"/>
    <property type="evidence" value="ECO:0000318"/>
    <property type="project" value="GO_Central"/>
</dbReference>
<dbReference type="GO" id="GO:0007276">
    <property type="term" value="P:gamete generation"/>
    <property type="evidence" value="ECO:0000318"/>
    <property type="project" value="GO_Central"/>
</dbReference>
<dbReference type="GO" id="GO:0007281">
    <property type="term" value="P:germ cell development"/>
    <property type="evidence" value="ECO:0000318"/>
    <property type="project" value="GO_Central"/>
</dbReference>
<dbReference type="GO" id="GO:0007141">
    <property type="term" value="P:male meiosis I"/>
    <property type="evidence" value="ECO:0000250"/>
    <property type="project" value="UniProtKB"/>
</dbReference>
<dbReference type="GO" id="GO:0007140">
    <property type="term" value="P:male meiotic nuclear division"/>
    <property type="evidence" value="ECO:0000250"/>
    <property type="project" value="UniProtKB"/>
</dbReference>
<dbReference type="GO" id="GO:0034587">
    <property type="term" value="P:piRNA processing"/>
    <property type="evidence" value="ECO:0000250"/>
    <property type="project" value="UniProtKB"/>
</dbReference>
<dbReference type="GO" id="GO:0007283">
    <property type="term" value="P:spermatogenesis"/>
    <property type="evidence" value="ECO:0000250"/>
    <property type="project" value="UniProtKB"/>
</dbReference>
<dbReference type="GO" id="GO:0141196">
    <property type="term" value="P:transposable element silencing by piRNA-mediated DNA methylation"/>
    <property type="evidence" value="ECO:0000250"/>
    <property type="project" value="UniProtKB"/>
</dbReference>
<dbReference type="GO" id="GO:0141006">
    <property type="term" value="P:transposable element silencing by piRNA-mediated heterochromatin formation"/>
    <property type="evidence" value="ECO:0000250"/>
    <property type="project" value="UniProtKB"/>
</dbReference>
<dbReference type="CDD" id="cd18052">
    <property type="entry name" value="DEADc_DDX4"/>
    <property type="match status" value="1"/>
</dbReference>
<dbReference type="CDD" id="cd18787">
    <property type="entry name" value="SF2_C_DEAD"/>
    <property type="match status" value="1"/>
</dbReference>
<dbReference type="FunFam" id="3.40.50.300:FF:000008">
    <property type="entry name" value="ATP-dependent RNA helicase RhlB"/>
    <property type="match status" value="1"/>
</dbReference>
<dbReference type="FunFam" id="3.40.50.300:FF:000397">
    <property type="entry name" value="Probable ATP-dependent RNA helicase DDX4"/>
    <property type="match status" value="1"/>
</dbReference>
<dbReference type="Gene3D" id="3.40.50.300">
    <property type="entry name" value="P-loop containing nucleotide triphosphate hydrolases"/>
    <property type="match status" value="2"/>
</dbReference>
<dbReference type="InterPro" id="IPR011545">
    <property type="entry name" value="DEAD/DEAH_box_helicase_dom"/>
</dbReference>
<dbReference type="InterPro" id="IPR014001">
    <property type="entry name" value="Helicase_ATP-bd"/>
</dbReference>
<dbReference type="InterPro" id="IPR001650">
    <property type="entry name" value="Helicase_C-like"/>
</dbReference>
<dbReference type="InterPro" id="IPR027417">
    <property type="entry name" value="P-loop_NTPase"/>
</dbReference>
<dbReference type="InterPro" id="IPR000629">
    <property type="entry name" value="RNA-helicase_DEAD-box_CS"/>
</dbReference>
<dbReference type="InterPro" id="IPR014014">
    <property type="entry name" value="RNA_helicase_DEAD_Q_motif"/>
</dbReference>
<dbReference type="PANTHER" id="PTHR47958">
    <property type="entry name" value="ATP-DEPENDENT RNA HELICASE DBP3"/>
    <property type="match status" value="1"/>
</dbReference>
<dbReference type="Pfam" id="PF00270">
    <property type="entry name" value="DEAD"/>
    <property type="match status" value="1"/>
</dbReference>
<dbReference type="Pfam" id="PF00271">
    <property type="entry name" value="Helicase_C"/>
    <property type="match status" value="1"/>
</dbReference>
<dbReference type="SMART" id="SM00487">
    <property type="entry name" value="DEXDc"/>
    <property type="match status" value="1"/>
</dbReference>
<dbReference type="SMART" id="SM00490">
    <property type="entry name" value="HELICc"/>
    <property type="match status" value="1"/>
</dbReference>
<dbReference type="SUPFAM" id="SSF52540">
    <property type="entry name" value="P-loop containing nucleoside triphosphate hydrolases"/>
    <property type="match status" value="2"/>
</dbReference>
<dbReference type="PROSITE" id="PS00039">
    <property type="entry name" value="DEAD_ATP_HELICASE"/>
    <property type="match status" value="1"/>
</dbReference>
<dbReference type="PROSITE" id="PS51192">
    <property type="entry name" value="HELICASE_ATP_BIND_1"/>
    <property type="match status" value="1"/>
</dbReference>
<dbReference type="PROSITE" id="PS51194">
    <property type="entry name" value="HELICASE_CTER"/>
    <property type="match status" value="1"/>
</dbReference>
<dbReference type="PROSITE" id="PS51195">
    <property type="entry name" value="Q_MOTIF"/>
    <property type="match status" value="1"/>
</dbReference>
<feature type="chain" id="PRO_0000054980" description="Probable ATP-dependent RNA helicase DDX4">
    <location>
        <begin position="1"/>
        <end position="722"/>
    </location>
</feature>
<feature type="domain" description="Helicase ATP-binding" evidence="4">
    <location>
        <begin position="317"/>
        <end position="500"/>
    </location>
</feature>
<feature type="domain" description="Helicase C-terminal" evidence="5">
    <location>
        <begin position="528"/>
        <end position="673"/>
    </location>
</feature>
<feature type="region of interest" description="Disordered" evidence="6">
    <location>
        <begin position="1"/>
        <end position="241"/>
    </location>
</feature>
<feature type="region of interest" description="Interaction with RANBP9" evidence="3">
    <location>
        <begin position="226"/>
        <end position="245"/>
    </location>
</feature>
<feature type="region of interest" description="Disordered" evidence="6">
    <location>
        <begin position="702"/>
        <end position="722"/>
    </location>
</feature>
<feature type="short sequence motif" description="Q motif">
    <location>
        <begin position="286"/>
        <end position="314"/>
    </location>
</feature>
<feature type="short sequence motif" description="DEAD box" evidence="1">
    <location>
        <begin position="444"/>
        <end position="447"/>
    </location>
</feature>
<feature type="compositionally biased region" description="Basic and acidic residues" evidence="6">
    <location>
        <begin position="21"/>
        <end position="35"/>
    </location>
</feature>
<feature type="compositionally biased region" description="Basic and acidic residues" evidence="6">
    <location>
        <begin position="66"/>
        <end position="78"/>
    </location>
</feature>
<feature type="compositionally biased region" description="Gly residues" evidence="6">
    <location>
        <begin position="150"/>
        <end position="162"/>
    </location>
</feature>
<feature type="compositionally biased region" description="Polar residues" evidence="6">
    <location>
        <begin position="702"/>
        <end position="713"/>
    </location>
</feature>
<feature type="binding site" evidence="4">
    <location>
        <begin position="330"/>
        <end position="337"/>
    </location>
    <ligand>
        <name>ATP</name>
        <dbReference type="ChEBI" id="CHEBI:30616"/>
    </ligand>
</feature>
<feature type="modified residue" description="Phosphoserine" evidence="2">
    <location>
        <position position="220"/>
    </location>
</feature>
<feature type="modified residue" description="Phosphoserine" evidence="1">
    <location>
        <position position="224"/>
    </location>
</feature>
<feature type="modified residue" description="Phosphoserine" evidence="1">
    <location>
        <position position="720"/>
    </location>
</feature>
<protein>
    <recommendedName>
        <fullName>Probable ATP-dependent RNA helicase DDX4</fullName>
        <ecNumber evidence="1">3.6.4.13</ecNumber>
    </recommendedName>
    <alternativeName>
        <fullName>DEAD box protein 4</fullName>
    </alternativeName>
    <alternativeName>
        <fullName>Vasa homolog</fullName>
    </alternativeName>
    <alternativeName>
        <fullName>Vasa-like protein</fullName>
    </alternativeName>
</protein>